<reference key="1">
    <citation type="submission" date="2001-01" db="EMBL/GenBank/DDBJ databases">
        <authorList>
            <person name="Agarwala K.L."/>
            <person name="Suzuki T."/>
            <person name="Tsutsumi Y."/>
            <person name="Amano K."/>
            <person name="Yamakawa K."/>
        </authorList>
    </citation>
    <scope>NUCLEOTIDE SEQUENCE [MRNA]</scope>
    <source>
        <strain>ICR</strain>
    </source>
</reference>
<reference key="2">
    <citation type="journal article" date="2005" name="Science">
        <title>The transcriptional landscape of the mammalian genome.</title>
        <authorList>
            <person name="Carninci P."/>
            <person name="Kasukawa T."/>
            <person name="Katayama S."/>
            <person name="Gough J."/>
            <person name="Frith M.C."/>
            <person name="Maeda N."/>
            <person name="Oyama R."/>
            <person name="Ravasi T."/>
            <person name="Lenhard B."/>
            <person name="Wells C."/>
            <person name="Kodzius R."/>
            <person name="Shimokawa K."/>
            <person name="Bajic V.B."/>
            <person name="Brenner S.E."/>
            <person name="Batalov S."/>
            <person name="Forrest A.R."/>
            <person name="Zavolan M."/>
            <person name="Davis M.J."/>
            <person name="Wilming L.G."/>
            <person name="Aidinis V."/>
            <person name="Allen J.E."/>
            <person name="Ambesi-Impiombato A."/>
            <person name="Apweiler R."/>
            <person name="Aturaliya R.N."/>
            <person name="Bailey T.L."/>
            <person name="Bansal M."/>
            <person name="Baxter L."/>
            <person name="Beisel K.W."/>
            <person name="Bersano T."/>
            <person name="Bono H."/>
            <person name="Chalk A.M."/>
            <person name="Chiu K.P."/>
            <person name="Choudhary V."/>
            <person name="Christoffels A."/>
            <person name="Clutterbuck D.R."/>
            <person name="Crowe M.L."/>
            <person name="Dalla E."/>
            <person name="Dalrymple B.P."/>
            <person name="de Bono B."/>
            <person name="Della Gatta G."/>
            <person name="di Bernardo D."/>
            <person name="Down T."/>
            <person name="Engstrom P."/>
            <person name="Fagiolini M."/>
            <person name="Faulkner G."/>
            <person name="Fletcher C.F."/>
            <person name="Fukushima T."/>
            <person name="Furuno M."/>
            <person name="Futaki S."/>
            <person name="Gariboldi M."/>
            <person name="Georgii-Hemming P."/>
            <person name="Gingeras T.R."/>
            <person name="Gojobori T."/>
            <person name="Green R.E."/>
            <person name="Gustincich S."/>
            <person name="Harbers M."/>
            <person name="Hayashi Y."/>
            <person name="Hensch T.K."/>
            <person name="Hirokawa N."/>
            <person name="Hill D."/>
            <person name="Huminiecki L."/>
            <person name="Iacono M."/>
            <person name="Ikeo K."/>
            <person name="Iwama A."/>
            <person name="Ishikawa T."/>
            <person name="Jakt M."/>
            <person name="Kanapin A."/>
            <person name="Katoh M."/>
            <person name="Kawasawa Y."/>
            <person name="Kelso J."/>
            <person name="Kitamura H."/>
            <person name="Kitano H."/>
            <person name="Kollias G."/>
            <person name="Krishnan S.P."/>
            <person name="Kruger A."/>
            <person name="Kummerfeld S.K."/>
            <person name="Kurochkin I.V."/>
            <person name="Lareau L.F."/>
            <person name="Lazarevic D."/>
            <person name="Lipovich L."/>
            <person name="Liu J."/>
            <person name="Liuni S."/>
            <person name="McWilliam S."/>
            <person name="Madan Babu M."/>
            <person name="Madera M."/>
            <person name="Marchionni L."/>
            <person name="Matsuda H."/>
            <person name="Matsuzawa S."/>
            <person name="Miki H."/>
            <person name="Mignone F."/>
            <person name="Miyake S."/>
            <person name="Morris K."/>
            <person name="Mottagui-Tabar S."/>
            <person name="Mulder N."/>
            <person name="Nakano N."/>
            <person name="Nakauchi H."/>
            <person name="Ng P."/>
            <person name="Nilsson R."/>
            <person name="Nishiguchi S."/>
            <person name="Nishikawa S."/>
            <person name="Nori F."/>
            <person name="Ohara O."/>
            <person name="Okazaki Y."/>
            <person name="Orlando V."/>
            <person name="Pang K.C."/>
            <person name="Pavan W.J."/>
            <person name="Pavesi G."/>
            <person name="Pesole G."/>
            <person name="Petrovsky N."/>
            <person name="Piazza S."/>
            <person name="Reed J."/>
            <person name="Reid J.F."/>
            <person name="Ring B.Z."/>
            <person name="Ringwald M."/>
            <person name="Rost B."/>
            <person name="Ruan Y."/>
            <person name="Salzberg S.L."/>
            <person name="Sandelin A."/>
            <person name="Schneider C."/>
            <person name="Schoenbach C."/>
            <person name="Sekiguchi K."/>
            <person name="Semple C.A."/>
            <person name="Seno S."/>
            <person name="Sessa L."/>
            <person name="Sheng Y."/>
            <person name="Shibata Y."/>
            <person name="Shimada H."/>
            <person name="Shimada K."/>
            <person name="Silva D."/>
            <person name="Sinclair B."/>
            <person name="Sperling S."/>
            <person name="Stupka E."/>
            <person name="Sugiura K."/>
            <person name="Sultana R."/>
            <person name="Takenaka Y."/>
            <person name="Taki K."/>
            <person name="Tammoja K."/>
            <person name="Tan S.L."/>
            <person name="Tang S."/>
            <person name="Taylor M.S."/>
            <person name="Tegner J."/>
            <person name="Teichmann S.A."/>
            <person name="Ueda H.R."/>
            <person name="van Nimwegen E."/>
            <person name="Verardo R."/>
            <person name="Wei C.L."/>
            <person name="Yagi K."/>
            <person name="Yamanishi H."/>
            <person name="Zabarovsky E."/>
            <person name="Zhu S."/>
            <person name="Zimmer A."/>
            <person name="Hide W."/>
            <person name="Bult C."/>
            <person name="Grimmond S.M."/>
            <person name="Teasdale R.D."/>
            <person name="Liu E.T."/>
            <person name="Brusic V."/>
            <person name="Quackenbush J."/>
            <person name="Wahlestedt C."/>
            <person name="Mattick J.S."/>
            <person name="Hume D.A."/>
            <person name="Kai C."/>
            <person name="Sasaki D."/>
            <person name="Tomaru Y."/>
            <person name="Fukuda S."/>
            <person name="Kanamori-Katayama M."/>
            <person name="Suzuki M."/>
            <person name="Aoki J."/>
            <person name="Arakawa T."/>
            <person name="Iida J."/>
            <person name="Imamura K."/>
            <person name="Itoh M."/>
            <person name="Kato T."/>
            <person name="Kawaji H."/>
            <person name="Kawagashira N."/>
            <person name="Kawashima T."/>
            <person name="Kojima M."/>
            <person name="Kondo S."/>
            <person name="Konno H."/>
            <person name="Nakano K."/>
            <person name="Ninomiya N."/>
            <person name="Nishio T."/>
            <person name="Okada M."/>
            <person name="Plessy C."/>
            <person name="Shibata K."/>
            <person name="Shiraki T."/>
            <person name="Suzuki S."/>
            <person name="Tagami M."/>
            <person name="Waki K."/>
            <person name="Watahiki A."/>
            <person name="Okamura-Oho Y."/>
            <person name="Suzuki H."/>
            <person name="Kawai J."/>
            <person name="Hayashizaki Y."/>
        </authorList>
    </citation>
    <scope>NUCLEOTIDE SEQUENCE [LARGE SCALE MRNA]</scope>
    <source>
        <strain>C57BL/6J</strain>
        <tissue>Lung</tissue>
        <tissue>Skin</tissue>
    </source>
</reference>
<reference key="3">
    <citation type="journal article" date="2009" name="PLoS Biol.">
        <title>Lineage-specific biology revealed by a finished genome assembly of the mouse.</title>
        <authorList>
            <person name="Church D.M."/>
            <person name="Goodstadt L."/>
            <person name="Hillier L.W."/>
            <person name="Zody M.C."/>
            <person name="Goldstein S."/>
            <person name="She X."/>
            <person name="Bult C.J."/>
            <person name="Agarwala R."/>
            <person name="Cherry J.L."/>
            <person name="DiCuccio M."/>
            <person name="Hlavina W."/>
            <person name="Kapustin Y."/>
            <person name="Meric P."/>
            <person name="Maglott D."/>
            <person name="Birtle Z."/>
            <person name="Marques A.C."/>
            <person name="Graves T."/>
            <person name="Zhou S."/>
            <person name="Teague B."/>
            <person name="Potamousis K."/>
            <person name="Churas C."/>
            <person name="Place M."/>
            <person name="Herschleb J."/>
            <person name="Runnheim R."/>
            <person name="Forrest D."/>
            <person name="Amos-Landgraf J."/>
            <person name="Schwartz D.C."/>
            <person name="Cheng Z."/>
            <person name="Lindblad-Toh K."/>
            <person name="Eichler E.E."/>
            <person name="Ponting C.P."/>
        </authorList>
    </citation>
    <scope>NUCLEOTIDE SEQUENCE [LARGE SCALE GENOMIC DNA]</scope>
    <source>
        <strain>C57BL/6J</strain>
    </source>
</reference>
<reference key="4">
    <citation type="journal article" date="2004" name="Genome Res.">
        <title>The status, quality, and expansion of the NIH full-length cDNA project: the Mammalian Gene Collection (MGC).</title>
        <authorList>
            <consortium name="The MGC Project Team"/>
        </authorList>
    </citation>
    <scope>NUCLEOTIDE SEQUENCE [LARGE SCALE MRNA]</scope>
    <source>
        <strain>FVB/N</strain>
        <tissue>Eye</tissue>
        <tissue>Mammary tumor</tissue>
        <tissue>Salivary gland</tissue>
    </source>
</reference>
<name>UTP6_MOUSE</name>
<accession>Q8VCY6</accession>
<accession>Q8CH76</accession>
<sequence length="597" mass="70429">MAEIIQERIEDRIPELEQLERIGLFSHAEIKAIIKKASDLEYKIHRRTLLKEDFINYVQYEINLLELIQRRRARIKYSFKKDEIEYSMVHRVQGVFGRASAKWKDDVQLWLSYIVFCKKWGTKTHLSKIFSAMLAIHSNKPALWIMAAKWEMEDRLSSESARQLFLRALRFHPECPKLYQEYFRMELMHAEKLRKEKQEFEKAAMDMGDFDHPEEILKGELARIIYKNSISKIKGAEFHVSLLAIAQLFDFAKDLQKEIYDDLQALHTDDPLTWDYVARRELEIESQPGEEQPVSKQAKAVEMGRREERCCAVYEEAVKALPTEAMWKCYITFCLERFSKKTSSVPLRGQRLERTMLAFRKAHELKLLSEVQYKQWIDLLLRQDLFKEALQVAEAGTELFKDSVTMWQTKLQVLIDSKSPDVEMRFEEAFAHLKPQVCLPLWISWAEWSESAKSQEDTEAIFKKAIIAVTGASSVTLKEKYLDWAYRSGGYKKARAVFKSLQESRPFSVEFFRKMMQFEKEQEPCKMVNLREYYERALREFGTSDSDLWMDYIKEELNHPFGKPENCGQIYWRAMKMLQGQSAELFVAKHAMHQAGH</sequence>
<organism>
    <name type="scientific">Mus musculus</name>
    <name type="common">Mouse</name>
    <dbReference type="NCBI Taxonomy" id="10090"/>
    <lineage>
        <taxon>Eukaryota</taxon>
        <taxon>Metazoa</taxon>
        <taxon>Chordata</taxon>
        <taxon>Craniata</taxon>
        <taxon>Vertebrata</taxon>
        <taxon>Euteleostomi</taxon>
        <taxon>Mammalia</taxon>
        <taxon>Eutheria</taxon>
        <taxon>Euarchontoglires</taxon>
        <taxon>Glires</taxon>
        <taxon>Rodentia</taxon>
        <taxon>Myomorpha</taxon>
        <taxon>Muroidea</taxon>
        <taxon>Muridae</taxon>
        <taxon>Murinae</taxon>
        <taxon>Mus</taxon>
        <taxon>Mus</taxon>
    </lineage>
</organism>
<feature type="chain" id="PRO_0000239466" description="U3 small nucleolar RNA-associated protein 6 homolog">
    <location>
        <begin position="1"/>
        <end position="597"/>
    </location>
</feature>
<feature type="repeat" description="HAT 1">
    <location>
        <begin position="121"/>
        <end position="153"/>
    </location>
</feature>
<feature type="repeat" description="HAT 2">
    <location>
        <begin position="156"/>
        <end position="188"/>
    </location>
</feature>
<feature type="repeat" description="HAT 3">
    <location>
        <begin position="304"/>
        <end position="335"/>
    </location>
</feature>
<feature type="repeat" description="HAT 4">
    <location>
        <begin position="488"/>
        <end position="520"/>
    </location>
</feature>
<feature type="repeat" description="HAT 5">
    <location>
        <begin position="524"/>
        <end position="557"/>
    </location>
</feature>
<feature type="sequence conflict" description="In Ref. 1; AAO15383." evidence="2" ref="1">
    <original>P</original>
    <variation>S</variation>
    <location>
        <position position="524"/>
    </location>
</feature>
<dbReference type="EMBL" id="AF334387">
    <property type="protein sequence ID" value="AAO15383.1"/>
    <property type="molecule type" value="mRNA"/>
</dbReference>
<dbReference type="EMBL" id="AK029151">
    <property type="protein sequence ID" value="BAC26328.1"/>
    <property type="molecule type" value="mRNA"/>
</dbReference>
<dbReference type="EMBL" id="AK084976">
    <property type="protein sequence ID" value="BAC39327.1"/>
    <property type="molecule type" value="mRNA"/>
</dbReference>
<dbReference type="EMBL" id="AL591113">
    <property type="status" value="NOT_ANNOTATED_CDS"/>
    <property type="molecule type" value="Genomic_DNA"/>
</dbReference>
<dbReference type="EMBL" id="BC018250">
    <property type="protein sequence ID" value="AAH18250.1"/>
    <property type="molecule type" value="mRNA"/>
</dbReference>
<dbReference type="EMBL" id="BC024850">
    <property type="protein sequence ID" value="AAH24850.1"/>
    <property type="molecule type" value="mRNA"/>
</dbReference>
<dbReference type="EMBL" id="BC023920">
    <property type="protein sequence ID" value="AAH23920.1"/>
    <property type="molecule type" value="mRNA"/>
</dbReference>
<dbReference type="CCDS" id="CCDS25124.1"/>
<dbReference type="RefSeq" id="NP_659075.1">
    <property type="nucleotide sequence ID" value="NM_144826.3"/>
</dbReference>
<dbReference type="SMR" id="Q8VCY6"/>
<dbReference type="BioGRID" id="229829">
    <property type="interactions" value="4"/>
</dbReference>
<dbReference type="FunCoup" id="Q8VCY6">
    <property type="interactions" value="3537"/>
</dbReference>
<dbReference type="IntAct" id="Q8VCY6">
    <property type="interactions" value="1"/>
</dbReference>
<dbReference type="STRING" id="10090.ENSMUSP00000046643"/>
<dbReference type="GlyGen" id="Q8VCY6">
    <property type="glycosylation" value="1 site, 1 O-linked glycan (1 site)"/>
</dbReference>
<dbReference type="iPTMnet" id="Q8VCY6"/>
<dbReference type="PhosphoSitePlus" id="Q8VCY6"/>
<dbReference type="PaxDb" id="10090-ENSMUSP00000046643"/>
<dbReference type="PeptideAtlas" id="Q8VCY6"/>
<dbReference type="ProteomicsDB" id="297952"/>
<dbReference type="Pumba" id="Q8VCY6"/>
<dbReference type="Antibodypedia" id="15269">
    <property type="antibodies" value="139 antibodies from 26 providers"/>
</dbReference>
<dbReference type="DNASU" id="216987"/>
<dbReference type="Ensembl" id="ENSMUST00000043152.6">
    <property type="protein sequence ID" value="ENSMUSP00000046643.6"/>
    <property type="gene ID" value="ENSMUSG00000035575.12"/>
</dbReference>
<dbReference type="Ensembl" id="ENSMUST00000108241.8">
    <property type="protein sequence ID" value="ENSMUSP00000103876.2"/>
    <property type="gene ID" value="ENSMUSG00000035575.12"/>
</dbReference>
<dbReference type="GeneID" id="216987"/>
<dbReference type="KEGG" id="mmu:216987"/>
<dbReference type="UCSC" id="uc007klb.1">
    <property type="organism name" value="mouse"/>
</dbReference>
<dbReference type="AGR" id="MGI:2445193"/>
<dbReference type="CTD" id="55813"/>
<dbReference type="MGI" id="MGI:2445193">
    <property type="gene designation" value="Utp6"/>
</dbReference>
<dbReference type="VEuPathDB" id="HostDB:ENSMUSG00000035575"/>
<dbReference type="eggNOG" id="KOG2396">
    <property type="taxonomic scope" value="Eukaryota"/>
</dbReference>
<dbReference type="GeneTree" id="ENSGT00390000016493"/>
<dbReference type="HOGENOM" id="CLU_026025_2_0_1"/>
<dbReference type="InParanoid" id="Q8VCY6"/>
<dbReference type="OMA" id="CKQWNAK"/>
<dbReference type="OrthoDB" id="28112at2759"/>
<dbReference type="PhylomeDB" id="Q8VCY6"/>
<dbReference type="TreeFam" id="TF323957"/>
<dbReference type="Reactome" id="R-MMU-6791226">
    <property type="pathway name" value="Major pathway of rRNA processing in the nucleolus and cytosol"/>
</dbReference>
<dbReference type="BioGRID-ORCS" id="216987">
    <property type="hits" value="26 hits in 77 CRISPR screens"/>
</dbReference>
<dbReference type="ChiTaRS" id="Utp6">
    <property type="organism name" value="mouse"/>
</dbReference>
<dbReference type="PRO" id="PR:Q8VCY6"/>
<dbReference type="Proteomes" id="UP000000589">
    <property type="component" value="Chromosome 11"/>
</dbReference>
<dbReference type="RNAct" id="Q8VCY6">
    <property type="molecule type" value="protein"/>
</dbReference>
<dbReference type="Bgee" id="ENSMUSG00000035575">
    <property type="expression patterns" value="Expressed in indifferent gonad and 263 other cell types or tissues"/>
</dbReference>
<dbReference type="GO" id="GO:0005694">
    <property type="term" value="C:chromosome"/>
    <property type="evidence" value="ECO:0007669"/>
    <property type="project" value="Ensembl"/>
</dbReference>
<dbReference type="GO" id="GO:0005730">
    <property type="term" value="C:nucleolus"/>
    <property type="evidence" value="ECO:0007669"/>
    <property type="project" value="UniProtKB-SubCell"/>
</dbReference>
<dbReference type="GO" id="GO:0032040">
    <property type="term" value="C:small-subunit processome"/>
    <property type="evidence" value="ECO:0000250"/>
    <property type="project" value="UniProtKB"/>
</dbReference>
<dbReference type="GO" id="GO:0030515">
    <property type="term" value="F:snoRNA binding"/>
    <property type="evidence" value="ECO:0007669"/>
    <property type="project" value="InterPro"/>
</dbReference>
<dbReference type="GO" id="GO:0000462">
    <property type="term" value="P:maturation of SSU-rRNA from tricistronic rRNA transcript (SSU-rRNA, 5.8S rRNA, LSU-rRNA)"/>
    <property type="evidence" value="ECO:0007669"/>
    <property type="project" value="InterPro"/>
</dbReference>
<dbReference type="GO" id="GO:0042274">
    <property type="term" value="P:ribosomal small subunit biogenesis"/>
    <property type="evidence" value="ECO:0000250"/>
    <property type="project" value="UniProtKB"/>
</dbReference>
<dbReference type="FunFam" id="1.25.40.10:FF:000356">
    <property type="entry name" value="U3 small nucleolar RNA-associated protein 6 homolog"/>
    <property type="match status" value="1"/>
</dbReference>
<dbReference type="FunFam" id="1.25.40.10:FF:001123">
    <property type="entry name" value="UTP6 small subunit processome component"/>
    <property type="match status" value="1"/>
</dbReference>
<dbReference type="Gene3D" id="1.25.40.10">
    <property type="entry name" value="Tetratricopeptide repeat domain"/>
    <property type="match status" value="3"/>
</dbReference>
<dbReference type="InterPro" id="IPR003107">
    <property type="entry name" value="HAT"/>
</dbReference>
<dbReference type="InterPro" id="IPR011990">
    <property type="entry name" value="TPR-like_helical_dom_sf"/>
</dbReference>
<dbReference type="InterPro" id="IPR013949">
    <property type="entry name" value="Utp6"/>
</dbReference>
<dbReference type="InterPro" id="IPR056907">
    <property type="entry name" value="UTP6_C"/>
</dbReference>
<dbReference type="InterPro" id="IPR055347">
    <property type="entry name" value="UTP6_N"/>
</dbReference>
<dbReference type="PANTHER" id="PTHR23271">
    <property type="entry name" value="HEPATOCELLULAR CARCINOMA-ASSOCIATED ANTIGEN 66"/>
    <property type="match status" value="1"/>
</dbReference>
<dbReference type="PANTHER" id="PTHR23271:SF1">
    <property type="entry name" value="U3 SMALL NUCLEOLAR RNA-ASSOCIATED PROTEIN 6 HOMOLOG"/>
    <property type="match status" value="1"/>
</dbReference>
<dbReference type="Pfam" id="PF08640">
    <property type="entry name" value="U3_assoc_6"/>
    <property type="match status" value="1"/>
</dbReference>
<dbReference type="Pfam" id="PF24892">
    <property type="entry name" value="UTP6_C"/>
    <property type="match status" value="1"/>
</dbReference>
<dbReference type="SMART" id="SM00386">
    <property type="entry name" value="HAT"/>
    <property type="match status" value="6"/>
</dbReference>
<dbReference type="SUPFAM" id="SSF48452">
    <property type="entry name" value="TPR-like"/>
    <property type="match status" value="2"/>
</dbReference>
<gene>
    <name type="primary">Utp6</name>
    <name type="synonym">Mhat</name>
</gene>
<keyword id="KW-0539">Nucleus</keyword>
<keyword id="KW-1185">Reference proteome</keyword>
<keyword id="KW-0677">Repeat</keyword>
<keyword id="KW-0698">rRNA processing</keyword>
<proteinExistence type="evidence at transcript level"/>
<comment type="function">
    <text evidence="1">Part of the small subunit (SSU) processome, first precursor of the small eukaryotic ribosomal subunit. During the assembly of the SSU processome in the nucleolus, many ribosome biogenesis factors, an RNA chaperone and ribosomal proteins associate with the nascent pre-rRNA and work in concert to generate RNA folding, modifications, rearrangements and cleavage as well as targeted degradation of pre-ribosomal RNA by the RNA exosome. Involved in nucleolar processing of pre-18S ribosomal RNA.</text>
</comment>
<comment type="subunit">
    <text evidence="1">Part of the small subunit (SSU) processome, composed of more than 70 proteins and the RNA chaperone small nucleolar RNA (snoRNA) U3.</text>
</comment>
<comment type="subcellular location">
    <subcellularLocation>
        <location evidence="1">Nucleus</location>
        <location evidence="1">Nucleolus</location>
    </subcellularLocation>
</comment>
<comment type="similarity">
    <text evidence="2">Belongs to the UTP6 family.</text>
</comment>
<evidence type="ECO:0000250" key="1">
    <source>
        <dbReference type="UniProtKB" id="Q9NYH9"/>
    </source>
</evidence>
<evidence type="ECO:0000305" key="2"/>
<protein>
    <recommendedName>
        <fullName>U3 small nucleolar RNA-associated protein 6 homolog</fullName>
    </recommendedName>
    <alternativeName>
        <fullName>Multiple hat domains protein</fullName>
    </alternativeName>
</protein>